<feature type="chain" id="PRO_0000239899" description="Urease subunit beta">
    <location>
        <begin position="1"/>
        <end position="101"/>
    </location>
</feature>
<proteinExistence type="inferred from homology"/>
<dbReference type="EC" id="3.5.1.5" evidence="1"/>
<dbReference type="EMBL" id="CP000250">
    <property type="protein sequence ID" value="ABD06509.1"/>
    <property type="molecule type" value="Genomic_DNA"/>
</dbReference>
<dbReference type="RefSeq" id="WP_011440697.1">
    <property type="nucleotide sequence ID" value="NC_007778.1"/>
</dbReference>
<dbReference type="SMR" id="Q2IZ51"/>
<dbReference type="STRING" id="316058.RPB_1801"/>
<dbReference type="KEGG" id="rpb:RPB_1801"/>
<dbReference type="eggNOG" id="COG0832">
    <property type="taxonomic scope" value="Bacteria"/>
</dbReference>
<dbReference type="HOGENOM" id="CLU_129707_1_1_5"/>
<dbReference type="OrthoDB" id="9797217at2"/>
<dbReference type="UniPathway" id="UPA00258">
    <property type="reaction ID" value="UER00370"/>
</dbReference>
<dbReference type="Proteomes" id="UP000008809">
    <property type="component" value="Chromosome"/>
</dbReference>
<dbReference type="GO" id="GO:0035550">
    <property type="term" value="C:urease complex"/>
    <property type="evidence" value="ECO:0007669"/>
    <property type="project" value="InterPro"/>
</dbReference>
<dbReference type="GO" id="GO:0009039">
    <property type="term" value="F:urease activity"/>
    <property type="evidence" value="ECO:0007669"/>
    <property type="project" value="UniProtKB-UniRule"/>
</dbReference>
<dbReference type="GO" id="GO:0043419">
    <property type="term" value="P:urea catabolic process"/>
    <property type="evidence" value="ECO:0007669"/>
    <property type="project" value="UniProtKB-UniRule"/>
</dbReference>
<dbReference type="CDD" id="cd00407">
    <property type="entry name" value="Urease_beta"/>
    <property type="match status" value="1"/>
</dbReference>
<dbReference type="FunFam" id="2.10.150.10:FF:000001">
    <property type="entry name" value="Urease subunit beta"/>
    <property type="match status" value="1"/>
</dbReference>
<dbReference type="Gene3D" id="2.10.150.10">
    <property type="entry name" value="Urease, beta subunit"/>
    <property type="match status" value="1"/>
</dbReference>
<dbReference type="HAMAP" id="MF_01954">
    <property type="entry name" value="Urease_beta"/>
    <property type="match status" value="1"/>
</dbReference>
<dbReference type="InterPro" id="IPR002019">
    <property type="entry name" value="Urease_beta-like"/>
</dbReference>
<dbReference type="InterPro" id="IPR036461">
    <property type="entry name" value="Urease_betasu_sf"/>
</dbReference>
<dbReference type="InterPro" id="IPR050069">
    <property type="entry name" value="Urease_subunit"/>
</dbReference>
<dbReference type="NCBIfam" id="NF009682">
    <property type="entry name" value="PRK13203.1"/>
    <property type="match status" value="1"/>
</dbReference>
<dbReference type="NCBIfam" id="TIGR00192">
    <property type="entry name" value="urease_beta"/>
    <property type="match status" value="1"/>
</dbReference>
<dbReference type="PANTHER" id="PTHR33569">
    <property type="entry name" value="UREASE"/>
    <property type="match status" value="1"/>
</dbReference>
<dbReference type="PANTHER" id="PTHR33569:SF1">
    <property type="entry name" value="UREASE"/>
    <property type="match status" value="1"/>
</dbReference>
<dbReference type="Pfam" id="PF00699">
    <property type="entry name" value="Urease_beta"/>
    <property type="match status" value="1"/>
</dbReference>
<dbReference type="SUPFAM" id="SSF51278">
    <property type="entry name" value="Urease, beta-subunit"/>
    <property type="match status" value="1"/>
</dbReference>
<accession>Q2IZ51</accession>
<gene>
    <name evidence="1" type="primary">ureB</name>
    <name type="ordered locus">RPB_1801</name>
</gene>
<sequence>MIPGELLIEDGEIELNAGRATVTLSVANTGDRPIQVGSHYHFFETNPALRFDRDKARGMRLDIAAGTAVRFEPGQTRDVQLVALAGKRVVYGFRGDVMGKL</sequence>
<keyword id="KW-0963">Cytoplasm</keyword>
<keyword id="KW-0378">Hydrolase</keyword>
<keyword id="KW-1185">Reference proteome</keyword>
<organism>
    <name type="scientific">Rhodopseudomonas palustris (strain HaA2)</name>
    <dbReference type="NCBI Taxonomy" id="316058"/>
    <lineage>
        <taxon>Bacteria</taxon>
        <taxon>Pseudomonadati</taxon>
        <taxon>Pseudomonadota</taxon>
        <taxon>Alphaproteobacteria</taxon>
        <taxon>Hyphomicrobiales</taxon>
        <taxon>Nitrobacteraceae</taxon>
        <taxon>Rhodopseudomonas</taxon>
    </lineage>
</organism>
<reference key="1">
    <citation type="submission" date="2006-01" db="EMBL/GenBank/DDBJ databases">
        <title>Complete sequence of Rhodopseudomonas palustris HaA2.</title>
        <authorList>
            <consortium name="US DOE Joint Genome Institute"/>
            <person name="Copeland A."/>
            <person name="Lucas S."/>
            <person name="Lapidus A."/>
            <person name="Barry K."/>
            <person name="Detter J.C."/>
            <person name="Glavina T."/>
            <person name="Hammon N."/>
            <person name="Israni S."/>
            <person name="Pitluck S."/>
            <person name="Chain P."/>
            <person name="Malfatti S."/>
            <person name="Shin M."/>
            <person name="Vergez L."/>
            <person name="Schmutz J."/>
            <person name="Larimer F."/>
            <person name="Land M."/>
            <person name="Hauser L."/>
            <person name="Pelletier D.A."/>
            <person name="Kyrpides N."/>
            <person name="Anderson I."/>
            <person name="Oda Y."/>
            <person name="Harwood C.S."/>
            <person name="Richardson P."/>
        </authorList>
    </citation>
    <scope>NUCLEOTIDE SEQUENCE [LARGE SCALE GENOMIC DNA]</scope>
    <source>
        <strain>HaA2</strain>
    </source>
</reference>
<comment type="catalytic activity">
    <reaction evidence="1">
        <text>urea + 2 H2O + H(+) = hydrogencarbonate + 2 NH4(+)</text>
        <dbReference type="Rhea" id="RHEA:20557"/>
        <dbReference type="ChEBI" id="CHEBI:15377"/>
        <dbReference type="ChEBI" id="CHEBI:15378"/>
        <dbReference type="ChEBI" id="CHEBI:16199"/>
        <dbReference type="ChEBI" id="CHEBI:17544"/>
        <dbReference type="ChEBI" id="CHEBI:28938"/>
        <dbReference type="EC" id="3.5.1.5"/>
    </reaction>
</comment>
<comment type="pathway">
    <text evidence="1">Nitrogen metabolism; urea degradation; CO(2) and NH(3) from urea (urease route): step 1/1.</text>
</comment>
<comment type="subunit">
    <text evidence="1">Heterotrimer of UreA (gamma), UreB (beta) and UreC (alpha) subunits. Three heterotrimers associate to form the active enzyme.</text>
</comment>
<comment type="subcellular location">
    <subcellularLocation>
        <location evidence="1">Cytoplasm</location>
    </subcellularLocation>
</comment>
<comment type="similarity">
    <text evidence="1">Belongs to the urease beta subunit family.</text>
</comment>
<protein>
    <recommendedName>
        <fullName evidence="1">Urease subunit beta</fullName>
        <ecNumber evidence="1">3.5.1.5</ecNumber>
    </recommendedName>
    <alternativeName>
        <fullName evidence="1">Urea amidohydrolase subunit beta</fullName>
    </alternativeName>
</protein>
<evidence type="ECO:0000255" key="1">
    <source>
        <dbReference type="HAMAP-Rule" id="MF_01954"/>
    </source>
</evidence>
<name>URE2_RHOP2</name>